<reference key="1">
    <citation type="journal article" date="2003" name="Proc. Natl. Acad. Sci. U.S.A.">
        <title>Complete genome sequence of Lactobacillus plantarum WCFS1.</title>
        <authorList>
            <person name="Kleerebezem M."/>
            <person name="Boekhorst J."/>
            <person name="van Kranenburg R."/>
            <person name="Molenaar D."/>
            <person name="Kuipers O.P."/>
            <person name="Leer R."/>
            <person name="Tarchini R."/>
            <person name="Peters S.A."/>
            <person name="Sandbrink H.M."/>
            <person name="Fiers M.W.E.J."/>
            <person name="Stiekema W."/>
            <person name="Klein Lankhorst R.M."/>
            <person name="Bron P.A."/>
            <person name="Hoffer S.M."/>
            <person name="Nierop Groot M.N."/>
            <person name="Kerkhoven R."/>
            <person name="De Vries M."/>
            <person name="Ursing B."/>
            <person name="De Vos W.M."/>
            <person name="Siezen R.J."/>
        </authorList>
    </citation>
    <scope>NUCLEOTIDE SEQUENCE [LARGE SCALE GENOMIC DNA]</scope>
    <source>
        <strain>ATCC BAA-793 / NCIMB 8826 / WCFS1</strain>
    </source>
</reference>
<reference key="2">
    <citation type="journal article" date="2012" name="J. Bacteriol.">
        <title>Complete resequencing and reannotation of the Lactobacillus plantarum WCFS1 genome.</title>
        <authorList>
            <person name="Siezen R.J."/>
            <person name="Francke C."/>
            <person name="Renckens B."/>
            <person name="Boekhorst J."/>
            <person name="Wels M."/>
            <person name="Kleerebezem M."/>
            <person name="van Hijum S.A."/>
        </authorList>
    </citation>
    <scope>NUCLEOTIDE SEQUENCE [LARGE SCALE GENOMIC DNA]</scope>
    <scope>GENOME REANNOTATION</scope>
    <source>
        <strain>ATCC BAA-793 / NCIMB 8826 / WCFS1</strain>
    </source>
</reference>
<reference key="3">
    <citation type="journal article" date="2015" name="J. Basic Microbiol.">
        <title>Identification and characterization of enolase as a collagen-binding protein in Lactobacillus plantarum.</title>
        <authorList>
            <person name="Salzillo M."/>
            <person name="Vastano V."/>
            <person name="Capri U."/>
            <person name="Muscariello L."/>
            <person name="Sacco M."/>
            <person name="Marasco R."/>
        </authorList>
    </citation>
    <scope>IDENTIFICATION BY MASS SPECTROMETRY</scope>
    <scope>COLLAGEN-BINDING</scope>
    <scope>SUBCELLULAR LOCATION</scope>
    <scope>DOMAIN</scope>
    <scope>DISRUPTION PHENOTYPE</scope>
    <source>
        <strain>LM3</strain>
    </source>
</reference>
<organism>
    <name type="scientific">Lactiplantibacillus plantarum (strain ATCC BAA-793 / NCIMB 8826 / WCFS1)</name>
    <name type="common">Lactobacillus plantarum</name>
    <dbReference type="NCBI Taxonomy" id="220668"/>
    <lineage>
        <taxon>Bacteria</taxon>
        <taxon>Bacillati</taxon>
        <taxon>Bacillota</taxon>
        <taxon>Bacilli</taxon>
        <taxon>Lactobacillales</taxon>
        <taxon>Lactobacillaceae</taxon>
        <taxon>Lactiplantibacillus</taxon>
    </lineage>
</organism>
<accession>Q88YH3</accession>
<accession>F9UM13</accession>
<comment type="function">
    <text evidence="1">Catalyzes the reversible conversion of 2-phosphoglycerate (2-PG) into phosphoenolpyruvate (PEP). It is essential for the degradation of carbohydrates via glycolysis.</text>
</comment>
<comment type="function">
    <text evidence="2">'Moonlights' as a collagen receptor. Binds host (human) collagen, which may contribute to pathogenicity (PubMed:25721875).</text>
</comment>
<comment type="catalytic activity">
    <reaction evidence="1">
        <text>(2R)-2-phosphoglycerate = phosphoenolpyruvate + H2O</text>
        <dbReference type="Rhea" id="RHEA:10164"/>
        <dbReference type="ChEBI" id="CHEBI:15377"/>
        <dbReference type="ChEBI" id="CHEBI:58289"/>
        <dbReference type="ChEBI" id="CHEBI:58702"/>
        <dbReference type="EC" id="4.2.1.11"/>
    </reaction>
</comment>
<comment type="cofactor">
    <cofactor evidence="1">
        <name>Mg(2+)</name>
        <dbReference type="ChEBI" id="CHEBI:18420"/>
    </cofactor>
    <text evidence="1">Binds a second Mg(2+) ion via substrate during catalysis.</text>
</comment>
<comment type="pathway">
    <text evidence="1">Carbohydrate degradation; glycolysis; pyruvate from D-glyceraldehyde 3-phosphate: step 4/5.</text>
</comment>
<comment type="subcellular location">
    <subcellularLocation>
        <location evidence="1">Cytoplasm</location>
    </subcellularLocation>
    <subcellularLocation>
        <location evidence="1">Secreted</location>
    </subcellularLocation>
    <subcellularLocation>
        <location evidence="1 2">Cell surface</location>
    </subcellularLocation>
    <text evidence="1">Fractions of enolase are present in both the cytoplasm and on the cell surface.</text>
</comment>
<comment type="domain">
    <text evidence="2">An internal region (residues 73-140) is capable of binding collagen (PubMed:25721875).</text>
</comment>
<comment type="disruption phenotype">
    <text evidence="2">About 6-fold less binding of bacteria to human collagen (PubMed:25721875).</text>
</comment>
<comment type="similarity">
    <text evidence="1">Belongs to the enolase family.</text>
</comment>
<protein>
    <recommendedName>
        <fullName evidence="1">Enolase 1</fullName>
        <ecNumber evidence="1">4.2.1.11</ecNumber>
    </recommendedName>
    <alternativeName>
        <fullName evidence="1">2-phospho-D-glycerate hydro-lyase 1</fullName>
    </alternativeName>
    <alternativeName>
        <fullName evidence="1">2-phosphoglycerate dehydratase 1</fullName>
    </alternativeName>
</protein>
<feature type="chain" id="PRO_0000133906" description="Enolase 1">
    <location>
        <begin position="1"/>
        <end position="442"/>
    </location>
</feature>
<feature type="region of interest" description="Binds human collagen" evidence="2">
    <location>
        <begin position="73"/>
        <end position="140"/>
    </location>
</feature>
<feature type="active site" description="Proton donor" evidence="1">
    <location>
        <position position="205"/>
    </location>
</feature>
<feature type="active site" description="Proton acceptor" evidence="1">
    <location>
        <position position="342"/>
    </location>
</feature>
<feature type="binding site" evidence="1">
    <location>
        <position position="163"/>
    </location>
    <ligand>
        <name>(2R)-2-phosphoglycerate</name>
        <dbReference type="ChEBI" id="CHEBI:58289"/>
    </ligand>
</feature>
<feature type="binding site" evidence="1">
    <location>
        <position position="242"/>
    </location>
    <ligand>
        <name>Mg(2+)</name>
        <dbReference type="ChEBI" id="CHEBI:18420"/>
    </ligand>
</feature>
<feature type="binding site" evidence="1">
    <location>
        <position position="290"/>
    </location>
    <ligand>
        <name>Mg(2+)</name>
        <dbReference type="ChEBI" id="CHEBI:18420"/>
    </ligand>
</feature>
<feature type="binding site" evidence="1">
    <location>
        <position position="317"/>
    </location>
    <ligand>
        <name>Mg(2+)</name>
        <dbReference type="ChEBI" id="CHEBI:18420"/>
    </ligand>
</feature>
<feature type="binding site" evidence="1">
    <location>
        <position position="342"/>
    </location>
    <ligand>
        <name>(2R)-2-phosphoglycerate</name>
        <dbReference type="ChEBI" id="CHEBI:58289"/>
    </ligand>
</feature>
<feature type="binding site" evidence="1">
    <location>
        <position position="371"/>
    </location>
    <ligand>
        <name>(2R)-2-phosphoglycerate</name>
        <dbReference type="ChEBI" id="CHEBI:58289"/>
    </ligand>
</feature>
<feature type="binding site" evidence="1">
    <location>
        <position position="372"/>
    </location>
    <ligand>
        <name>(2R)-2-phosphoglycerate</name>
        <dbReference type="ChEBI" id="CHEBI:58289"/>
    </ligand>
</feature>
<feature type="binding site" evidence="1">
    <location>
        <position position="393"/>
    </location>
    <ligand>
        <name>(2R)-2-phosphoglycerate</name>
        <dbReference type="ChEBI" id="CHEBI:58289"/>
    </ligand>
</feature>
<proteinExistence type="evidence at protein level"/>
<dbReference type="EC" id="4.2.1.11" evidence="1"/>
<dbReference type="EMBL" id="AL935263">
    <property type="protein sequence ID" value="CCC78252.1"/>
    <property type="molecule type" value="Genomic_DNA"/>
</dbReference>
<dbReference type="RefSeq" id="YP_004888766.1">
    <property type="nucleotide sequence ID" value="NC_004567.2"/>
</dbReference>
<dbReference type="SMR" id="Q88YH3"/>
<dbReference type="STRING" id="220668.lp_0792"/>
<dbReference type="MoonProt" id="Q88YH3"/>
<dbReference type="EnsemblBacteria" id="CCC78252">
    <property type="protein sequence ID" value="CCC78252"/>
    <property type="gene ID" value="lp_0792"/>
</dbReference>
<dbReference type="KEGG" id="lpl:lp_0792"/>
<dbReference type="PATRIC" id="fig|220668.9.peg.669"/>
<dbReference type="eggNOG" id="COG0148">
    <property type="taxonomic scope" value="Bacteria"/>
</dbReference>
<dbReference type="HOGENOM" id="CLU_031223_2_1_9"/>
<dbReference type="OrthoDB" id="9804716at2"/>
<dbReference type="PhylomeDB" id="Q88YH3"/>
<dbReference type="BRENDA" id="4.2.1.11">
    <property type="organism ID" value="2849"/>
</dbReference>
<dbReference type="UniPathway" id="UPA00109">
    <property type="reaction ID" value="UER00187"/>
</dbReference>
<dbReference type="Proteomes" id="UP000000432">
    <property type="component" value="Chromosome"/>
</dbReference>
<dbReference type="GO" id="GO:0009986">
    <property type="term" value="C:cell surface"/>
    <property type="evidence" value="ECO:0000314"/>
    <property type="project" value="CAFA"/>
</dbReference>
<dbReference type="GO" id="GO:0005576">
    <property type="term" value="C:extracellular region"/>
    <property type="evidence" value="ECO:0007669"/>
    <property type="project" value="UniProtKB-SubCell"/>
</dbReference>
<dbReference type="GO" id="GO:0000015">
    <property type="term" value="C:phosphopyruvate hydratase complex"/>
    <property type="evidence" value="ECO:0007669"/>
    <property type="project" value="InterPro"/>
</dbReference>
<dbReference type="GO" id="GO:0001968">
    <property type="term" value="F:fibronectin binding"/>
    <property type="evidence" value="ECO:0000353"/>
    <property type="project" value="CAFA"/>
</dbReference>
<dbReference type="GO" id="GO:0000287">
    <property type="term" value="F:magnesium ion binding"/>
    <property type="evidence" value="ECO:0007669"/>
    <property type="project" value="UniProtKB-UniRule"/>
</dbReference>
<dbReference type="GO" id="GO:0004634">
    <property type="term" value="F:phosphopyruvate hydratase activity"/>
    <property type="evidence" value="ECO:0007669"/>
    <property type="project" value="UniProtKB-UniRule"/>
</dbReference>
<dbReference type="GO" id="GO:0006096">
    <property type="term" value="P:glycolytic process"/>
    <property type="evidence" value="ECO:0007669"/>
    <property type="project" value="UniProtKB-UniRule"/>
</dbReference>
<dbReference type="CDD" id="cd03313">
    <property type="entry name" value="enolase"/>
    <property type="match status" value="1"/>
</dbReference>
<dbReference type="FunFam" id="3.20.20.120:FF:000001">
    <property type="entry name" value="Enolase"/>
    <property type="match status" value="1"/>
</dbReference>
<dbReference type="FunFam" id="3.30.390.10:FF:000001">
    <property type="entry name" value="Enolase"/>
    <property type="match status" value="1"/>
</dbReference>
<dbReference type="Gene3D" id="3.20.20.120">
    <property type="entry name" value="Enolase-like C-terminal domain"/>
    <property type="match status" value="1"/>
</dbReference>
<dbReference type="Gene3D" id="3.30.390.10">
    <property type="entry name" value="Enolase-like, N-terminal domain"/>
    <property type="match status" value="1"/>
</dbReference>
<dbReference type="HAMAP" id="MF_00318">
    <property type="entry name" value="Enolase"/>
    <property type="match status" value="1"/>
</dbReference>
<dbReference type="InterPro" id="IPR000941">
    <property type="entry name" value="Enolase"/>
</dbReference>
<dbReference type="InterPro" id="IPR036849">
    <property type="entry name" value="Enolase-like_C_sf"/>
</dbReference>
<dbReference type="InterPro" id="IPR029017">
    <property type="entry name" value="Enolase-like_N"/>
</dbReference>
<dbReference type="InterPro" id="IPR020810">
    <property type="entry name" value="Enolase_C"/>
</dbReference>
<dbReference type="InterPro" id="IPR020809">
    <property type="entry name" value="Enolase_CS"/>
</dbReference>
<dbReference type="InterPro" id="IPR020811">
    <property type="entry name" value="Enolase_N"/>
</dbReference>
<dbReference type="NCBIfam" id="TIGR01060">
    <property type="entry name" value="eno"/>
    <property type="match status" value="1"/>
</dbReference>
<dbReference type="PANTHER" id="PTHR11902">
    <property type="entry name" value="ENOLASE"/>
    <property type="match status" value="1"/>
</dbReference>
<dbReference type="PANTHER" id="PTHR11902:SF1">
    <property type="entry name" value="ENOLASE"/>
    <property type="match status" value="1"/>
</dbReference>
<dbReference type="Pfam" id="PF00113">
    <property type="entry name" value="Enolase_C"/>
    <property type="match status" value="1"/>
</dbReference>
<dbReference type="Pfam" id="PF03952">
    <property type="entry name" value="Enolase_N"/>
    <property type="match status" value="1"/>
</dbReference>
<dbReference type="PIRSF" id="PIRSF001400">
    <property type="entry name" value="Enolase"/>
    <property type="match status" value="1"/>
</dbReference>
<dbReference type="PRINTS" id="PR00148">
    <property type="entry name" value="ENOLASE"/>
</dbReference>
<dbReference type="SFLD" id="SFLDS00001">
    <property type="entry name" value="Enolase"/>
    <property type="match status" value="1"/>
</dbReference>
<dbReference type="SFLD" id="SFLDF00002">
    <property type="entry name" value="enolase"/>
    <property type="match status" value="1"/>
</dbReference>
<dbReference type="SMART" id="SM01192">
    <property type="entry name" value="Enolase_C"/>
    <property type="match status" value="1"/>
</dbReference>
<dbReference type="SMART" id="SM01193">
    <property type="entry name" value="Enolase_N"/>
    <property type="match status" value="1"/>
</dbReference>
<dbReference type="SUPFAM" id="SSF51604">
    <property type="entry name" value="Enolase C-terminal domain-like"/>
    <property type="match status" value="1"/>
</dbReference>
<dbReference type="SUPFAM" id="SSF54826">
    <property type="entry name" value="Enolase N-terminal domain-like"/>
    <property type="match status" value="1"/>
</dbReference>
<dbReference type="PROSITE" id="PS00164">
    <property type="entry name" value="ENOLASE"/>
    <property type="match status" value="1"/>
</dbReference>
<keyword id="KW-0963">Cytoplasm</keyword>
<keyword id="KW-0324">Glycolysis</keyword>
<keyword id="KW-0456">Lyase</keyword>
<keyword id="KW-0460">Magnesium</keyword>
<keyword id="KW-0479">Metal-binding</keyword>
<keyword id="KW-1185">Reference proteome</keyword>
<keyword id="KW-0964">Secreted</keyword>
<evidence type="ECO:0000255" key="1">
    <source>
        <dbReference type="HAMAP-Rule" id="MF_00318"/>
    </source>
</evidence>
<evidence type="ECO:0000269" key="2">
    <source>
    </source>
</evidence>
<evidence type="ECO:0000303" key="3">
    <source>
    </source>
</evidence>
<name>ENO1_LACPL</name>
<sequence length="442" mass="48030">MSIITDIYAREVLDSRGNPTVEVELYTESGAFGRGIVPSGASTGEHEAVELRDGDKSRFMGKGVTKAVDNVNKLIAKEIVGYDVTDQRAIDQAMIKLDGTPNKAKLGANAILGVSIAAARAAADELEMPLYNYLGGFNAHVLPTPMMNVINGGAHANNDVDFQEFMIMPVGASSVKEAIRMGSETFHNLKAILNERGYSTAVGDEGGFAPDLKNNEEPFEILVEAIERAGYKPGKDIAIAFDCAASEFYNEETGKYDLKGEGENGQSFTAEEFVDLLDSIVDKYPIVSIEDPLDENNWEDWQMATAKLGKKVQIVGDDLFVTNTDYLAKGIKMGVANSILIKVNQIGTLTETVEAIEMAKEAGYTAIVSHRSGETEDTTIADLVVAMNAGQIKTGSMSRTERIAKYNQLMRIEDQLESTSEYKGIHGFYNLDEAARNTITSK</sequence>
<gene>
    <name evidence="1" type="primary">eno1</name>
    <name type="synonym">enoA</name>
    <name evidence="3" type="synonym">enoA1</name>
    <name type="ordered locus">lp_0792</name>
</gene>